<feature type="chain" id="PRO_0000180195" description="Acyl carrier protein">
    <location>
        <begin position="1"/>
        <end position="77"/>
    </location>
</feature>
<feature type="domain" description="Carrier" evidence="2">
    <location>
        <begin position="1"/>
        <end position="76"/>
    </location>
</feature>
<feature type="modified residue" description="O-(pantetheine 4'-phosphoryl)serine" evidence="2">
    <location>
        <position position="36"/>
    </location>
</feature>
<evidence type="ECO:0000255" key="1">
    <source>
        <dbReference type="HAMAP-Rule" id="MF_01217"/>
    </source>
</evidence>
<evidence type="ECO:0000255" key="2">
    <source>
        <dbReference type="PROSITE-ProRule" id="PRU00258"/>
    </source>
</evidence>
<comment type="function">
    <text evidence="1">Carrier of the growing fatty acid chain in fatty acid biosynthesis.</text>
</comment>
<comment type="pathway">
    <text evidence="1">Lipid metabolism; fatty acid biosynthesis.</text>
</comment>
<comment type="subcellular location">
    <subcellularLocation>
        <location evidence="1">Cytoplasm</location>
    </subcellularLocation>
</comment>
<comment type="PTM">
    <text evidence="1">4'-phosphopantetheine is transferred from CoA to a specific serine of apo-ACP by AcpS. This modification is essential for activity because fatty acids are bound in thioester linkage to the sulfhydryl of the prosthetic group.</text>
</comment>
<comment type="similarity">
    <text evidence="1">Belongs to the acyl carrier protein (ACP) family.</text>
</comment>
<name>ACP_STAEQ</name>
<organism>
    <name type="scientific">Staphylococcus epidermidis (strain ATCC 35984 / DSM 28319 / BCRC 17069 / CCUG 31568 / BM 3577 / RP62A)</name>
    <dbReference type="NCBI Taxonomy" id="176279"/>
    <lineage>
        <taxon>Bacteria</taxon>
        <taxon>Bacillati</taxon>
        <taxon>Bacillota</taxon>
        <taxon>Bacilli</taxon>
        <taxon>Bacillales</taxon>
        <taxon>Staphylococcaceae</taxon>
        <taxon>Staphylococcus</taxon>
    </lineage>
</organism>
<reference key="1">
    <citation type="journal article" date="2005" name="J. Bacteriol.">
        <title>Insights on evolution of virulence and resistance from the complete genome analysis of an early methicillin-resistant Staphylococcus aureus strain and a biofilm-producing methicillin-resistant Staphylococcus epidermidis strain.</title>
        <authorList>
            <person name="Gill S.R."/>
            <person name="Fouts D.E."/>
            <person name="Archer G.L."/>
            <person name="Mongodin E.F."/>
            <person name="DeBoy R.T."/>
            <person name="Ravel J."/>
            <person name="Paulsen I.T."/>
            <person name="Kolonay J.F."/>
            <person name="Brinkac L.M."/>
            <person name="Beanan M.J."/>
            <person name="Dodson R.J."/>
            <person name="Daugherty S.C."/>
            <person name="Madupu R."/>
            <person name="Angiuoli S.V."/>
            <person name="Durkin A.S."/>
            <person name="Haft D.H."/>
            <person name="Vamathevan J.J."/>
            <person name="Khouri H."/>
            <person name="Utterback T.R."/>
            <person name="Lee C."/>
            <person name="Dimitrov G."/>
            <person name="Jiang L."/>
            <person name="Qin H."/>
            <person name="Weidman J."/>
            <person name="Tran K."/>
            <person name="Kang K.H."/>
            <person name="Hance I.R."/>
            <person name="Nelson K.E."/>
            <person name="Fraser C.M."/>
        </authorList>
    </citation>
    <scope>NUCLEOTIDE SEQUENCE [LARGE SCALE GENOMIC DNA]</scope>
    <source>
        <strain>ATCC 35984 / DSM 28319 / BCRC 17069 / CCUG 31568 / BM 3577 / RP62A</strain>
    </source>
</reference>
<keyword id="KW-0963">Cytoplasm</keyword>
<keyword id="KW-0275">Fatty acid biosynthesis</keyword>
<keyword id="KW-0276">Fatty acid metabolism</keyword>
<keyword id="KW-0444">Lipid biosynthesis</keyword>
<keyword id="KW-0443">Lipid metabolism</keyword>
<keyword id="KW-0596">Phosphopantetheine</keyword>
<keyword id="KW-0597">Phosphoprotein</keyword>
<keyword id="KW-1185">Reference proteome</keyword>
<gene>
    <name evidence="1" type="primary">acpP</name>
    <name type="ordered locus">SERP0798</name>
</gene>
<sequence length="77" mass="8565">MENFDKVKDIIVDRLGVDADKVTEDASFKDDLGADSLDIAELVMELEDEFGTEIPDEEAEKINTVGDAVKYINSLEK</sequence>
<protein>
    <recommendedName>
        <fullName evidence="1">Acyl carrier protein</fullName>
        <shortName evidence="1">ACP</shortName>
    </recommendedName>
</protein>
<accession>Q5HPV9</accession>
<dbReference type="EMBL" id="CP000029">
    <property type="protein sequence ID" value="AAW54129.1"/>
    <property type="molecule type" value="Genomic_DNA"/>
</dbReference>
<dbReference type="RefSeq" id="WP_001830184.1">
    <property type="nucleotide sequence ID" value="NC_002976.3"/>
</dbReference>
<dbReference type="SMR" id="Q5HPV9"/>
<dbReference type="STRING" id="176279.SERP0798"/>
<dbReference type="KEGG" id="ser:SERP0798"/>
<dbReference type="eggNOG" id="COG0236">
    <property type="taxonomic scope" value="Bacteria"/>
</dbReference>
<dbReference type="HOGENOM" id="CLU_108696_5_1_9"/>
<dbReference type="UniPathway" id="UPA00094"/>
<dbReference type="Proteomes" id="UP000000531">
    <property type="component" value="Chromosome"/>
</dbReference>
<dbReference type="GO" id="GO:0005829">
    <property type="term" value="C:cytosol"/>
    <property type="evidence" value="ECO:0007669"/>
    <property type="project" value="TreeGrafter"/>
</dbReference>
<dbReference type="GO" id="GO:0016020">
    <property type="term" value="C:membrane"/>
    <property type="evidence" value="ECO:0007669"/>
    <property type="project" value="GOC"/>
</dbReference>
<dbReference type="GO" id="GO:0000035">
    <property type="term" value="F:acyl binding"/>
    <property type="evidence" value="ECO:0007669"/>
    <property type="project" value="TreeGrafter"/>
</dbReference>
<dbReference type="GO" id="GO:0000036">
    <property type="term" value="F:acyl carrier activity"/>
    <property type="evidence" value="ECO:0007669"/>
    <property type="project" value="UniProtKB-UniRule"/>
</dbReference>
<dbReference type="GO" id="GO:0009245">
    <property type="term" value="P:lipid A biosynthetic process"/>
    <property type="evidence" value="ECO:0007669"/>
    <property type="project" value="TreeGrafter"/>
</dbReference>
<dbReference type="FunFam" id="1.10.1200.10:FF:000001">
    <property type="entry name" value="Acyl carrier protein"/>
    <property type="match status" value="1"/>
</dbReference>
<dbReference type="Gene3D" id="1.10.1200.10">
    <property type="entry name" value="ACP-like"/>
    <property type="match status" value="1"/>
</dbReference>
<dbReference type="HAMAP" id="MF_01217">
    <property type="entry name" value="Acyl_carrier"/>
    <property type="match status" value="1"/>
</dbReference>
<dbReference type="InterPro" id="IPR003231">
    <property type="entry name" value="ACP"/>
</dbReference>
<dbReference type="InterPro" id="IPR036736">
    <property type="entry name" value="ACP-like_sf"/>
</dbReference>
<dbReference type="InterPro" id="IPR009081">
    <property type="entry name" value="PP-bd_ACP"/>
</dbReference>
<dbReference type="InterPro" id="IPR006162">
    <property type="entry name" value="Ppantetheine_attach_site"/>
</dbReference>
<dbReference type="NCBIfam" id="TIGR00517">
    <property type="entry name" value="acyl_carrier"/>
    <property type="match status" value="1"/>
</dbReference>
<dbReference type="NCBIfam" id="NF002148">
    <property type="entry name" value="PRK00982.1-2"/>
    <property type="match status" value="1"/>
</dbReference>
<dbReference type="NCBIfam" id="NF002150">
    <property type="entry name" value="PRK00982.1-4"/>
    <property type="match status" value="1"/>
</dbReference>
<dbReference type="NCBIfam" id="NF002151">
    <property type="entry name" value="PRK00982.1-5"/>
    <property type="match status" value="1"/>
</dbReference>
<dbReference type="PANTHER" id="PTHR20863">
    <property type="entry name" value="ACYL CARRIER PROTEIN"/>
    <property type="match status" value="1"/>
</dbReference>
<dbReference type="PANTHER" id="PTHR20863:SF76">
    <property type="entry name" value="CARRIER DOMAIN-CONTAINING PROTEIN"/>
    <property type="match status" value="1"/>
</dbReference>
<dbReference type="Pfam" id="PF00550">
    <property type="entry name" value="PP-binding"/>
    <property type="match status" value="1"/>
</dbReference>
<dbReference type="SUPFAM" id="SSF47336">
    <property type="entry name" value="ACP-like"/>
    <property type="match status" value="1"/>
</dbReference>
<dbReference type="PROSITE" id="PS50075">
    <property type="entry name" value="CARRIER"/>
    <property type="match status" value="1"/>
</dbReference>
<dbReference type="PROSITE" id="PS00012">
    <property type="entry name" value="PHOSPHOPANTETHEINE"/>
    <property type="match status" value="1"/>
</dbReference>
<proteinExistence type="inferred from homology"/>